<accession>Q328D1</accession>
<sequence length="112" mass="12331">MLDEKSSNTASVVVLCTAPDEATAQDLAAKVLAEKLAACATLIPGATSLYYWEGKLEQEYEVQMILKTTVSHQQALLECLKSHHPYQTPELLVLPVTHGDTDYLSWLNASLR</sequence>
<reference key="1">
    <citation type="journal article" date="2005" name="Nucleic Acids Res.">
        <title>Genome dynamics and diversity of Shigella species, the etiologic agents of bacillary dysentery.</title>
        <authorList>
            <person name="Yang F."/>
            <person name="Yang J."/>
            <person name="Zhang X."/>
            <person name="Chen L."/>
            <person name="Jiang Y."/>
            <person name="Yan Y."/>
            <person name="Tang X."/>
            <person name="Wang J."/>
            <person name="Xiong Z."/>
            <person name="Dong J."/>
            <person name="Xue Y."/>
            <person name="Zhu Y."/>
            <person name="Xu X."/>
            <person name="Sun L."/>
            <person name="Chen S."/>
            <person name="Nie H."/>
            <person name="Peng J."/>
            <person name="Xu J."/>
            <person name="Wang Y."/>
            <person name="Yuan Z."/>
            <person name="Wen Y."/>
            <person name="Yao Z."/>
            <person name="Shen Y."/>
            <person name="Qiang B."/>
            <person name="Hou Y."/>
            <person name="Yu J."/>
            <person name="Jin Q."/>
        </authorList>
    </citation>
    <scope>NUCLEOTIDE SEQUENCE [LARGE SCALE GENOMIC DNA]</scope>
    <source>
        <strain>Sd197</strain>
    </source>
</reference>
<keyword id="KW-0186">Copper</keyword>
<keyword id="KW-0963">Cytoplasm</keyword>
<keyword id="KW-0479">Metal-binding</keyword>
<keyword id="KW-1185">Reference proteome</keyword>
<gene>
    <name evidence="1" type="primary">cutA</name>
    <name type="ordered locus">SDY_4442</name>
</gene>
<feature type="chain" id="PRO_0000280486" description="Divalent-cation tolerance protein CutA">
    <location>
        <begin position="1"/>
        <end position="112"/>
    </location>
</feature>
<feature type="binding site" evidence="1">
    <location>
        <position position="16"/>
    </location>
    <ligand>
        <name>Cu cation</name>
        <dbReference type="ChEBI" id="CHEBI:23378"/>
    </ligand>
</feature>
<feature type="binding site" evidence="1">
    <location>
        <position position="83"/>
    </location>
    <ligand>
        <name>Cu cation</name>
        <dbReference type="ChEBI" id="CHEBI:23378"/>
    </ligand>
</feature>
<feature type="binding site" evidence="1">
    <location>
        <position position="84"/>
    </location>
    <ligand>
        <name>Cu cation</name>
        <dbReference type="ChEBI" id="CHEBI:23378"/>
    </ligand>
</feature>
<comment type="function">
    <text evidence="1">Involved in resistance toward heavy metals.</text>
</comment>
<comment type="cofactor">
    <cofactor evidence="1">
        <name>Cu cation</name>
        <dbReference type="ChEBI" id="CHEBI:23378"/>
    </cofactor>
    <text evidence="1">Binds 1 copper ion per subunit.</text>
</comment>
<comment type="subunit">
    <text evidence="1">Homotrimer.</text>
</comment>
<comment type="subcellular location">
    <subcellularLocation>
        <location evidence="1">Cytoplasm</location>
    </subcellularLocation>
</comment>
<comment type="similarity">
    <text evidence="1">Belongs to the CutA family.</text>
</comment>
<evidence type="ECO:0000255" key="1">
    <source>
        <dbReference type="HAMAP-Rule" id="MF_01160"/>
    </source>
</evidence>
<organism>
    <name type="scientific">Shigella dysenteriae serotype 1 (strain Sd197)</name>
    <dbReference type="NCBI Taxonomy" id="300267"/>
    <lineage>
        <taxon>Bacteria</taxon>
        <taxon>Pseudomonadati</taxon>
        <taxon>Pseudomonadota</taxon>
        <taxon>Gammaproteobacteria</taxon>
        <taxon>Enterobacterales</taxon>
        <taxon>Enterobacteriaceae</taxon>
        <taxon>Shigella</taxon>
    </lineage>
</organism>
<proteinExistence type="inferred from homology"/>
<protein>
    <recommendedName>
        <fullName evidence="1">Divalent-cation tolerance protein CutA</fullName>
    </recommendedName>
</protein>
<dbReference type="EMBL" id="CP000034">
    <property type="protein sequence ID" value="ABB64324.1"/>
    <property type="molecule type" value="Genomic_DNA"/>
</dbReference>
<dbReference type="RefSeq" id="WP_000883400.1">
    <property type="nucleotide sequence ID" value="NC_007606.1"/>
</dbReference>
<dbReference type="RefSeq" id="YP_405815.1">
    <property type="nucleotide sequence ID" value="NC_007606.1"/>
</dbReference>
<dbReference type="SMR" id="Q328D1"/>
<dbReference type="STRING" id="300267.SDY_4442"/>
<dbReference type="EnsemblBacteria" id="ABB64324">
    <property type="protein sequence ID" value="ABB64324"/>
    <property type="gene ID" value="SDY_4442"/>
</dbReference>
<dbReference type="GeneID" id="93777687"/>
<dbReference type="KEGG" id="sdy:SDY_4442"/>
<dbReference type="PATRIC" id="fig|300267.13.peg.5240"/>
<dbReference type="HOGENOM" id="CLU_098807_3_0_6"/>
<dbReference type="Proteomes" id="UP000002716">
    <property type="component" value="Chromosome"/>
</dbReference>
<dbReference type="GO" id="GO:0005737">
    <property type="term" value="C:cytoplasm"/>
    <property type="evidence" value="ECO:0007669"/>
    <property type="project" value="UniProtKB-SubCell"/>
</dbReference>
<dbReference type="GO" id="GO:0005507">
    <property type="term" value="F:copper ion binding"/>
    <property type="evidence" value="ECO:0007669"/>
    <property type="project" value="UniProtKB-UniRule"/>
</dbReference>
<dbReference type="GO" id="GO:0010038">
    <property type="term" value="P:response to metal ion"/>
    <property type="evidence" value="ECO:0007669"/>
    <property type="project" value="InterPro"/>
</dbReference>
<dbReference type="FunFam" id="3.30.70.120:FF:000004">
    <property type="entry name" value="Divalent-cation tolerance protein CutA"/>
    <property type="match status" value="1"/>
</dbReference>
<dbReference type="Gene3D" id="3.30.70.120">
    <property type="match status" value="1"/>
</dbReference>
<dbReference type="HAMAP" id="MF_01160">
    <property type="entry name" value="CutA"/>
    <property type="match status" value="1"/>
</dbReference>
<dbReference type="InterPro" id="IPR023700">
    <property type="entry name" value="CutA_Enterobact"/>
</dbReference>
<dbReference type="InterPro" id="IPR004323">
    <property type="entry name" value="Ion_tolerance_CutA"/>
</dbReference>
<dbReference type="InterPro" id="IPR011322">
    <property type="entry name" value="N-reg_PII-like_a/b"/>
</dbReference>
<dbReference type="InterPro" id="IPR015867">
    <property type="entry name" value="N-reg_PII/ATP_PRibTrfase_C"/>
</dbReference>
<dbReference type="NCBIfam" id="NF007930">
    <property type="entry name" value="PRK10645.1"/>
    <property type="match status" value="1"/>
</dbReference>
<dbReference type="PANTHER" id="PTHR23419">
    <property type="entry name" value="DIVALENT CATION TOLERANCE CUTA-RELATED"/>
    <property type="match status" value="1"/>
</dbReference>
<dbReference type="PANTHER" id="PTHR23419:SF8">
    <property type="entry name" value="FI09726P"/>
    <property type="match status" value="1"/>
</dbReference>
<dbReference type="Pfam" id="PF03091">
    <property type="entry name" value="CutA1"/>
    <property type="match status" value="1"/>
</dbReference>
<dbReference type="SUPFAM" id="SSF54913">
    <property type="entry name" value="GlnB-like"/>
    <property type="match status" value="1"/>
</dbReference>
<name>CUTA_SHIDS</name>